<protein>
    <recommendedName>
        <fullName>Kunitz-type serine protease inhibitor homolog beta-bungarotoxin B1 chain</fullName>
    </recommendedName>
</protein>
<proteinExistence type="evidence at transcript level"/>
<accession>Q8AY46</accession>
<name>VKTHB_BUNCA</name>
<organism>
    <name type="scientific">Bungarus candidus</name>
    <name type="common">Malayan krait</name>
    <dbReference type="NCBI Taxonomy" id="92438"/>
    <lineage>
        <taxon>Eukaryota</taxon>
        <taxon>Metazoa</taxon>
        <taxon>Chordata</taxon>
        <taxon>Craniata</taxon>
        <taxon>Vertebrata</taxon>
        <taxon>Euteleostomi</taxon>
        <taxon>Lepidosauria</taxon>
        <taxon>Squamata</taxon>
        <taxon>Bifurcata</taxon>
        <taxon>Unidentata</taxon>
        <taxon>Episquamata</taxon>
        <taxon>Toxicofera</taxon>
        <taxon>Serpentes</taxon>
        <taxon>Colubroidea</taxon>
        <taxon>Elapidae</taxon>
        <taxon>Bungarinae</taxon>
        <taxon>Bungarus</taxon>
    </lineage>
</organism>
<sequence>MSSGGLLLLLGLLTLCAELTPVSSRQRHRDCDKPPDKGNCGSVRRAFYYDTRLKTCKAFPYRGCNGNGNHFKTETLCRCECLVYP</sequence>
<feature type="signal peptide" evidence="1">
    <location>
        <begin position="1"/>
        <end position="24"/>
    </location>
</feature>
<feature type="chain" id="PRO_0000271459" description="Kunitz-type serine protease inhibitor homolog beta-bungarotoxin B1 chain">
    <location>
        <begin position="25"/>
        <end position="85"/>
    </location>
</feature>
<feature type="domain" description="BPTI/Kunitz inhibitor" evidence="2">
    <location>
        <begin position="31"/>
        <end position="81"/>
    </location>
</feature>
<feature type="disulfide bond" evidence="2">
    <location>
        <begin position="31"/>
        <end position="81"/>
    </location>
</feature>
<feature type="disulfide bond" evidence="2">
    <location>
        <begin position="40"/>
        <end position="64"/>
    </location>
</feature>
<feature type="disulfide bond" evidence="2">
    <location>
        <begin position="56"/>
        <end position="77"/>
    </location>
</feature>
<feature type="disulfide bond" description="Interchain (with an A chain)" evidence="2">
    <location>
        <position position="79"/>
    </location>
</feature>
<comment type="function">
    <text evidence="1">Beta-bungarotoxin is a presynaptic neurotoxin of the venom. The B chain is homologous to venom basic protease inhibitors but has no protease inhibitor activity and is non-toxic (By similarity).</text>
</comment>
<comment type="subunit">
    <text evidence="1">Heterodimer; disulfide-linked. The A chain has phospholipase A2 activity and the B chain shows homology with the basic protease inhibitors (By similarity).</text>
</comment>
<comment type="subcellular location">
    <subcellularLocation>
        <location evidence="1">Secreted</location>
    </subcellularLocation>
</comment>
<comment type="tissue specificity">
    <text>Expressed by the venom gland.</text>
</comment>
<comment type="similarity">
    <text evidence="3">Belongs to the venom Kunitz-type family.</text>
</comment>
<comment type="sequence caution" evidence="3">
    <conflict type="erroneous initiation">
        <sequence resource="EMBL-CDS" id="AAL30065"/>
    </conflict>
</comment>
<dbReference type="EMBL" id="AY057883">
    <property type="protein sequence ID" value="AAL30065.1"/>
    <property type="status" value="ALT_INIT"/>
    <property type="molecule type" value="mRNA"/>
</dbReference>
<dbReference type="SMR" id="Q8AY46"/>
<dbReference type="MEROPS" id="I02.978"/>
<dbReference type="GO" id="GO:0005615">
    <property type="term" value="C:extracellular space"/>
    <property type="evidence" value="ECO:0007669"/>
    <property type="project" value="TreeGrafter"/>
</dbReference>
<dbReference type="GO" id="GO:0004867">
    <property type="term" value="F:serine-type endopeptidase inhibitor activity"/>
    <property type="evidence" value="ECO:0007669"/>
    <property type="project" value="InterPro"/>
</dbReference>
<dbReference type="GO" id="GO:0090729">
    <property type="term" value="F:toxin activity"/>
    <property type="evidence" value="ECO:0007669"/>
    <property type="project" value="UniProtKB-KW"/>
</dbReference>
<dbReference type="Gene3D" id="4.10.410.10">
    <property type="entry name" value="Pancreatic trypsin inhibitor Kunitz domain"/>
    <property type="match status" value="1"/>
</dbReference>
<dbReference type="InterPro" id="IPR002223">
    <property type="entry name" value="Kunitz_BPTI"/>
</dbReference>
<dbReference type="InterPro" id="IPR036880">
    <property type="entry name" value="Kunitz_BPTI_sf"/>
</dbReference>
<dbReference type="InterPro" id="IPR020901">
    <property type="entry name" value="Prtase_inh_Kunz-CS"/>
</dbReference>
<dbReference type="InterPro" id="IPR050098">
    <property type="entry name" value="TFPI/VKTCI-like"/>
</dbReference>
<dbReference type="PANTHER" id="PTHR10083:SF374">
    <property type="entry name" value="BPTI_KUNITZ INHIBITOR DOMAIN-CONTAINING PROTEIN"/>
    <property type="match status" value="1"/>
</dbReference>
<dbReference type="PANTHER" id="PTHR10083">
    <property type="entry name" value="KUNITZ-TYPE PROTEASE INHIBITOR-RELATED"/>
    <property type="match status" value="1"/>
</dbReference>
<dbReference type="Pfam" id="PF00014">
    <property type="entry name" value="Kunitz_BPTI"/>
    <property type="match status" value="1"/>
</dbReference>
<dbReference type="PRINTS" id="PR00759">
    <property type="entry name" value="BASICPTASE"/>
</dbReference>
<dbReference type="SMART" id="SM00131">
    <property type="entry name" value="KU"/>
    <property type="match status" value="1"/>
</dbReference>
<dbReference type="SUPFAM" id="SSF57362">
    <property type="entry name" value="BPTI-like"/>
    <property type="match status" value="1"/>
</dbReference>
<dbReference type="PROSITE" id="PS00280">
    <property type="entry name" value="BPTI_KUNITZ_1"/>
    <property type="match status" value="1"/>
</dbReference>
<dbReference type="PROSITE" id="PS50279">
    <property type="entry name" value="BPTI_KUNITZ_2"/>
    <property type="match status" value="1"/>
</dbReference>
<reference key="1">
    <citation type="submission" date="2001-10" db="EMBL/GenBank/DDBJ databases">
        <title>Structural and functional genomics of Bungarus candidus.</title>
        <authorList>
            <person name="Tsai I.-H."/>
            <person name="Wang Y.M."/>
            <person name="Hsu H.-Y."/>
        </authorList>
    </citation>
    <scope>NUCLEOTIDE SEQUENCE [MRNA]</scope>
    <source>
        <tissue>Venom gland</tissue>
    </source>
</reference>
<evidence type="ECO:0000250" key="1"/>
<evidence type="ECO:0000255" key="2">
    <source>
        <dbReference type="PROSITE-ProRule" id="PRU00031"/>
    </source>
</evidence>
<evidence type="ECO:0000305" key="3"/>
<keyword id="KW-1015">Disulfide bond</keyword>
<keyword id="KW-0528">Neurotoxin</keyword>
<keyword id="KW-0638">Presynaptic neurotoxin</keyword>
<keyword id="KW-0964">Secreted</keyword>
<keyword id="KW-0732">Signal</keyword>
<keyword id="KW-0800">Toxin</keyword>